<dbReference type="MEROPS" id="I13.013"/>
<dbReference type="GO" id="GO:0004867">
    <property type="term" value="F:serine-type endopeptidase inhibitor activity"/>
    <property type="evidence" value="ECO:0007669"/>
    <property type="project" value="UniProtKB-KW"/>
</dbReference>
<accession>P81064</accession>
<reference key="1">
    <citation type="journal article" date="1997" name="Eur. J. Biochem.">
        <title>Amino-acid-sequence determination and biological activity of cytin, a naturally occurring specific chymotrypsin inhibitor from the leech Theromyzon tessulatum.</title>
        <authorList>
            <person name="Chopin V."/>
            <person name="Bilfinger T.V."/>
            <person name="Stefano G.B."/>
            <person name="Hatiar I."/>
            <person name="Salzet M."/>
        </authorList>
    </citation>
    <scope>PROTEIN SEQUENCE</scope>
</reference>
<keyword id="KW-0903">Direct protein sequencing</keyword>
<keyword id="KW-1015">Disulfide bond</keyword>
<keyword id="KW-0646">Protease inhibitor</keyword>
<keyword id="KW-0722">Serine protease inhibitor</keyword>
<proteinExistence type="evidence at protein level"/>
<feature type="peptide" id="PRO_0000044297" description="Cytin chain B">
    <location>
        <begin position="1"/>
        <end position="22"/>
    </location>
</feature>
<feature type="disulfide bond" description="Interchain">
    <location>
        <position position="3"/>
    </location>
</feature>
<comment type="function">
    <text>Inhibitor of chymotrypsin.</text>
</comment>
<comment type="subunit">
    <text>Heterodimer of an A chain and a B chain, linked by a disulfide bond.</text>
</comment>
<comment type="similarity">
    <text evidence="1">Belongs to the protease inhibitor I13 (potato type I serine protease inhibitor) family.</text>
</comment>
<name>CYTB_THETS</name>
<evidence type="ECO:0000305" key="1"/>
<organism>
    <name type="scientific">Theromyzon tessulatum</name>
    <name type="common">Duck leech</name>
    <dbReference type="NCBI Taxonomy" id="13286"/>
    <lineage>
        <taxon>Eukaryota</taxon>
        <taxon>Metazoa</taxon>
        <taxon>Spiralia</taxon>
        <taxon>Lophotrochozoa</taxon>
        <taxon>Annelida</taxon>
        <taxon>Clitellata</taxon>
        <taxon>Hirudinea</taxon>
        <taxon>Rhynchobdellida</taxon>
        <taxon>Glossiphoniidae</taxon>
        <taxon>Theromyzon</taxon>
    </lineage>
</organism>
<protein>
    <recommendedName>
        <fullName>Cytin chain B</fullName>
    </recommendedName>
</protein>
<sequence length="22" mass="2504">LKCEWDGLVGTRGEIAKETIER</sequence>